<accession>B9KZW2</accession>
<sequence length="137" mass="14765">MADRRRGAARGGAARPRRRERKNIPRGRAYIHATFNNTIVTLTDPNGNVVAWSSAGSSGFKGTRKSTPYAAQVAAENAARKAMEHGMRQVDVYVKGAGAGREMAIRALAAAGLQVMSITDITPVPHNGCRPPKRRRT</sequence>
<dbReference type="EMBL" id="CP001275">
    <property type="protein sequence ID" value="ACM04540.1"/>
    <property type="molecule type" value="Genomic_DNA"/>
</dbReference>
<dbReference type="RefSeq" id="WP_015921923.1">
    <property type="nucleotide sequence ID" value="NC_011959.1"/>
</dbReference>
<dbReference type="SMR" id="B9KZW2"/>
<dbReference type="STRING" id="309801.trd_0959"/>
<dbReference type="KEGG" id="tro:trd_0959"/>
<dbReference type="eggNOG" id="COG0100">
    <property type="taxonomic scope" value="Bacteria"/>
</dbReference>
<dbReference type="HOGENOM" id="CLU_072439_5_0_0"/>
<dbReference type="OrthoDB" id="9806415at2"/>
<dbReference type="Proteomes" id="UP000000447">
    <property type="component" value="Chromosome"/>
</dbReference>
<dbReference type="GO" id="GO:1990904">
    <property type="term" value="C:ribonucleoprotein complex"/>
    <property type="evidence" value="ECO:0007669"/>
    <property type="project" value="UniProtKB-KW"/>
</dbReference>
<dbReference type="GO" id="GO:0005840">
    <property type="term" value="C:ribosome"/>
    <property type="evidence" value="ECO:0007669"/>
    <property type="project" value="UniProtKB-KW"/>
</dbReference>
<dbReference type="GO" id="GO:0019843">
    <property type="term" value="F:rRNA binding"/>
    <property type="evidence" value="ECO:0007669"/>
    <property type="project" value="UniProtKB-UniRule"/>
</dbReference>
<dbReference type="GO" id="GO:0003735">
    <property type="term" value="F:structural constituent of ribosome"/>
    <property type="evidence" value="ECO:0007669"/>
    <property type="project" value="InterPro"/>
</dbReference>
<dbReference type="GO" id="GO:0006412">
    <property type="term" value="P:translation"/>
    <property type="evidence" value="ECO:0007669"/>
    <property type="project" value="UniProtKB-UniRule"/>
</dbReference>
<dbReference type="FunFam" id="3.30.420.80:FF:000001">
    <property type="entry name" value="30S ribosomal protein S11"/>
    <property type="match status" value="1"/>
</dbReference>
<dbReference type="Gene3D" id="3.30.420.80">
    <property type="entry name" value="Ribosomal protein S11"/>
    <property type="match status" value="1"/>
</dbReference>
<dbReference type="HAMAP" id="MF_01310">
    <property type="entry name" value="Ribosomal_uS11"/>
    <property type="match status" value="1"/>
</dbReference>
<dbReference type="InterPro" id="IPR001971">
    <property type="entry name" value="Ribosomal_uS11"/>
</dbReference>
<dbReference type="InterPro" id="IPR019981">
    <property type="entry name" value="Ribosomal_uS11_bac-type"/>
</dbReference>
<dbReference type="InterPro" id="IPR018102">
    <property type="entry name" value="Ribosomal_uS11_CS"/>
</dbReference>
<dbReference type="InterPro" id="IPR036967">
    <property type="entry name" value="Ribosomal_uS11_sf"/>
</dbReference>
<dbReference type="NCBIfam" id="NF003698">
    <property type="entry name" value="PRK05309.1"/>
    <property type="match status" value="1"/>
</dbReference>
<dbReference type="NCBIfam" id="TIGR03632">
    <property type="entry name" value="uS11_bact"/>
    <property type="match status" value="1"/>
</dbReference>
<dbReference type="PANTHER" id="PTHR11759">
    <property type="entry name" value="40S RIBOSOMAL PROTEIN S14/30S RIBOSOMAL PROTEIN S11"/>
    <property type="match status" value="1"/>
</dbReference>
<dbReference type="Pfam" id="PF00411">
    <property type="entry name" value="Ribosomal_S11"/>
    <property type="match status" value="1"/>
</dbReference>
<dbReference type="PIRSF" id="PIRSF002131">
    <property type="entry name" value="Ribosomal_S11"/>
    <property type="match status" value="1"/>
</dbReference>
<dbReference type="SUPFAM" id="SSF53137">
    <property type="entry name" value="Translational machinery components"/>
    <property type="match status" value="1"/>
</dbReference>
<dbReference type="PROSITE" id="PS00054">
    <property type="entry name" value="RIBOSOMAL_S11"/>
    <property type="match status" value="1"/>
</dbReference>
<comment type="function">
    <text evidence="1">Located on the platform of the 30S subunit, it bridges several disparate RNA helices of the 16S rRNA. Forms part of the Shine-Dalgarno cleft in the 70S ribosome.</text>
</comment>
<comment type="subunit">
    <text evidence="1">Part of the 30S ribosomal subunit. Interacts with proteins S7 and S18. Binds to IF-3.</text>
</comment>
<comment type="similarity">
    <text evidence="1">Belongs to the universal ribosomal protein uS11 family.</text>
</comment>
<organism>
    <name type="scientific">Thermomicrobium roseum (strain ATCC 27502 / DSM 5159 / P-2)</name>
    <dbReference type="NCBI Taxonomy" id="309801"/>
    <lineage>
        <taxon>Bacteria</taxon>
        <taxon>Pseudomonadati</taxon>
        <taxon>Thermomicrobiota</taxon>
        <taxon>Thermomicrobia</taxon>
        <taxon>Thermomicrobiales</taxon>
        <taxon>Thermomicrobiaceae</taxon>
        <taxon>Thermomicrobium</taxon>
    </lineage>
</organism>
<evidence type="ECO:0000255" key="1">
    <source>
        <dbReference type="HAMAP-Rule" id="MF_01310"/>
    </source>
</evidence>
<evidence type="ECO:0000256" key="2">
    <source>
        <dbReference type="SAM" id="MobiDB-lite"/>
    </source>
</evidence>
<evidence type="ECO:0000305" key="3"/>
<protein>
    <recommendedName>
        <fullName evidence="1">Small ribosomal subunit protein uS11</fullName>
    </recommendedName>
    <alternativeName>
        <fullName evidence="3">30S ribosomal protein S11</fullName>
    </alternativeName>
</protein>
<feature type="chain" id="PRO_1000165577" description="Small ribosomal subunit protein uS11">
    <location>
        <begin position="1"/>
        <end position="137"/>
    </location>
</feature>
<feature type="region of interest" description="Disordered" evidence="2">
    <location>
        <begin position="1"/>
        <end position="25"/>
    </location>
</feature>
<feature type="compositionally biased region" description="Basic residues" evidence="2">
    <location>
        <begin position="15"/>
        <end position="25"/>
    </location>
</feature>
<keyword id="KW-1185">Reference proteome</keyword>
<keyword id="KW-0687">Ribonucleoprotein</keyword>
<keyword id="KW-0689">Ribosomal protein</keyword>
<keyword id="KW-0694">RNA-binding</keyword>
<keyword id="KW-0699">rRNA-binding</keyword>
<name>RS11_THERP</name>
<gene>
    <name evidence="1" type="primary">rpsK</name>
    <name type="ordered locus">trd_0959</name>
</gene>
<proteinExistence type="inferred from homology"/>
<reference key="1">
    <citation type="journal article" date="2009" name="PLoS ONE">
        <title>Complete genome sequence of the aerobic CO-oxidizing thermophile Thermomicrobium roseum.</title>
        <authorList>
            <person name="Wu D."/>
            <person name="Raymond J."/>
            <person name="Wu M."/>
            <person name="Chatterji S."/>
            <person name="Ren Q."/>
            <person name="Graham J.E."/>
            <person name="Bryant D.A."/>
            <person name="Robb F."/>
            <person name="Colman A."/>
            <person name="Tallon L.J."/>
            <person name="Badger J.H."/>
            <person name="Madupu R."/>
            <person name="Ward N.L."/>
            <person name="Eisen J.A."/>
        </authorList>
    </citation>
    <scope>NUCLEOTIDE SEQUENCE [LARGE SCALE GENOMIC DNA]</scope>
    <source>
        <strain>ATCC 27502 / DSM 5159 / P-2</strain>
    </source>
</reference>